<keyword id="KW-1231">Capsid inner membrane protein</keyword>
<keyword id="KW-0903">Direct protein sequencing</keyword>
<keyword id="KW-0472">Membrane</keyword>
<keyword id="KW-1185">Reference proteome</keyword>
<keyword id="KW-0946">Virion</keyword>
<dbReference type="EMBL" id="AF155037">
    <property type="protein sequence ID" value="AAD43560.4"/>
    <property type="molecule type" value="Genomic_DNA"/>
</dbReference>
<dbReference type="RefSeq" id="NP_049900.2">
    <property type="nucleotide sequence ID" value="NC_000867.1"/>
</dbReference>
<dbReference type="SMR" id="Q9XJR9"/>
<dbReference type="KEGG" id="vg:1262041"/>
<dbReference type="Proteomes" id="UP000002136">
    <property type="component" value="Genome"/>
</dbReference>
<dbReference type="GO" id="GO:0016020">
    <property type="term" value="C:membrane"/>
    <property type="evidence" value="ECO:0007669"/>
    <property type="project" value="UniProtKB-KW"/>
</dbReference>
<dbReference type="GO" id="GO:0039641">
    <property type="term" value="C:viral inner membrane"/>
    <property type="evidence" value="ECO:0007669"/>
    <property type="project" value="UniProtKB-KW"/>
</dbReference>
<dbReference type="GO" id="GO:0055036">
    <property type="term" value="C:virion membrane"/>
    <property type="evidence" value="ECO:0000314"/>
    <property type="project" value="CACAO"/>
</dbReference>
<dbReference type="CDD" id="cd01127">
    <property type="entry name" value="TrwB_TraG_TraD_VirD4"/>
    <property type="match status" value="1"/>
</dbReference>
<dbReference type="Gene3D" id="3.40.50.300">
    <property type="entry name" value="P-loop containing nucleotide triphosphate hydrolases"/>
    <property type="match status" value="1"/>
</dbReference>
<dbReference type="InterPro" id="IPR027417">
    <property type="entry name" value="P-loop_NTPase"/>
</dbReference>
<dbReference type="InterPro" id="IPR051162">
    <property type="entry name" value="T4SS_component"/>
</dbReference>
<dbReference type="PANTHER" id="PTHR30121:SF6">
    <property type="entry name" value="SLR6007 PROTEIN"/>
    <property type="match status" value="1"/>
</dbReference>
<dbReference type="PANTHER" id="PTHR30121">
    <property type="entry name" value="UNCHARACTERIZED PROTEIN YJGR-RELATED"/>
    <property type="match status" value="1"/>
</dbReference>
<dbReference type="SUPFAM" id="SSF52540">
    <property type="entry name" value="P-loop containing nucleoside triphosphate hydrolases"/>
    <property type="match status" value="1"/>
</dbReference>
<protein>
    <recommendedName>
        <fullName>Protein P9</fullName>
    </recommendedName>
    <alternativeName>
        <fullName>Protein IX</fullName>
    </alternativeName>
</protein>
<comment type="subcellular location">
    <subcellularLocation>
        <location evidence="2">Virion membrane</location>
    </subcellularLocation>
    <text evidence="1">Part of the capsid inner membrane.</text>
</comment>
<proteinExistence type="evidence at protein level"/>
<evidence type="ECO:0000305" key="1"/>
<evidence type="ECO:0000305" key="2">
    <source>
    </source>
</evidence>
<name>P9_BPPM2</name>
<feature type="chain" id="PRO_0000339906" description="Protein P9">
    <location>
        <begin position="1"/>
        <end position="218"/>
    </location>
</feature>
<sequence>MRTTTKKQIERTDPTLPNVHHLVVGATGSGKSAFIRDQVDFKGARVLAWDVDEDYRLPRVRSIKQFEKLVKKSGFGAIRCALTVEPTEENFERFCQLVFAISHAGAPMVVIVEELADVARIGKASPHWGQLSRKGRKYGVQLYVATQSPQEIDKTIVRQCNFKFCGALNSASAWRSMADNLDLSTREIKQLENIPKKQVQYWLKDGTRPTEKKTLTFK</sequence>
<organismHost>
    <name type="scientific">Pseudoalteromonas espejiana</name>
    <dbReference type="NCBI Taxonomy" id="28107"/>
</organismHost>
<gene>
    <name type="primary">IX</name>
</gene>
<organism>
    <name type="scientific">Pseudoalteromonas phage PM2</name>
    <name type="common">Bacteriophage PM2</name>
    <dbReference type="NCBI Taxonomy" id="2905728"/>
    <lineage>
        <taxon>Viruses</taxon>
        <taxon>Varidnaviria</taxon>
        <taxon>Bamfordvirae</taxon>
        <taxon>Preplasmiviricota</taxon>
        <taxon>Tectiliviricetes</taxon>
        <taxon>Vinavirales</taxon>
        <taxon>Corticoviridae</taxon>
        <taxon>Corticovirus</taxon>
        <taxon>Corticovirus PM2</taxon>
    </lineage>
</organism>
<reference key="1">
    <citation type="journal article" date="1999" name="Virology">
        <title>The complete genome sequence of PM2, the first lipid-containing bacterial virus to be isolated.</title>
        <authorList>
            <person name="Maennistoe R.H."/>
            <person name="Kivelae H.M."/>
            <person name="Paulin L."/>
            <person name="Bamford D.H."/>
            <person name="Bamford J.K."/>
        </authorList>
    </citation>
    <scope>NUCLEOTIDE SEQUENCE [GENOMIC DNA]</scope>
</reference>
<reference key="2">
    <citation type="journal article" date="2002" name="J. Virol.">
        <title>Bacteriophage PM2 has a protein capsid surrounding a spherical proteinaceous lipid core.</title>
        <authorList>
            <person name="Kivelae H.M."/>
            <person name="Kalkkinen N."/>
            <person name="Bamford D.H."/>
        </authorList>
    </citation>
    <scope>PROTEIN SEQUENCE OF 1-10</scope>
    <scope>SUBCELLULAR LOCATION</scope>
</reference>
<accession>Q9XJR9</accession>